<organism>
    <name type="scientific">Gluconobacter oxydans (strain 621H)</name>
    <name type="common">Gluconobacter suboxydans</name>
    <dbReference type="NCBI Taxonomy" id="290633"/>
    <lineage>
        <taxon>Bacteria</taxon>
        <taxon>Pseudomonadati</taxon>
        <taxon>Pseudomonadota</taxon>
        <taxon>Alphaproteobacteria</taxon>
        <taxon>Acetobacterales</taxon>
        <taxon>Acetobacteraceae</taxon>
        <taxon>Gluconobacter</taxon>
    </lineage>
</organism>
<dbReference type="EC" id="2.7.1.130" evidence="1"/>
<dbReference type="EMBL" id="CP000009">
    <property type="protein sequence ID" value="AAW61720.1"/>
    <property type="molecule type" value="Genomic_DNA"/>
</dbReference>
<dbReference type="RefSeq" id="WP_011253497.1">
    <property type="nucleotide sequence ID" value="NC_006677.1"/>
</dbReference>
<dbReference type="SMR" id="Q5FPH6"/>
<dbReference type="STRING" id="290633.GOX1984"/>
<dbReference type="KEGG" id="gox:GOX1984"/>
<dbReference type="eggNOG" id="COG1663">
    <property type="taxonomic scope" value="Bacteria"/>
</dbReference>
<dbReference type="HOGENOM" id="CLU_038816_0_0_5"/>
<dbReference type="UniPathway" id="UPA00359">
    <property type="reaction ID" value="UER00482"/>
</dbReference>
<dbReference type="Proteomes" id="UP000006375">
    <property type="component" value="Chromosome"/>
</dbReference>
<dbReference type="GO" id="GO:0005886">
    <property type="term" value="C:plasma membrane"/>
    <property type="evidence" value="ECO:0007669"/>
    <property type="project" value="TreeGrafter"/>
</dbReference>
<dbReference type="GO" id="GO:0005524">
    <property type="term" value="F:ATP binding"/>
    <property type="evidence" value="ECO:0007669"/>
    <property type="project" value="UniProtKB-UniRule"/>
</dbReference>
<dbReference type="GO" id="GO:0009029">
    <property type="term" value="F:tetraacyldisaccharide 4'-kinase activity"/>
    <property type="evidence" value="ECO:0007669"/>
    <property type="project" value="UniProtKB-UniRule"/>
</dbReference>
<dbReference type="GO" id="GO:0009245">
    <property type="term" value="P:lipid A biosynthetic process"/>
    <property type="evidence" value="ECO:0007669"/>
    <property type="project" value="UniProtKB-UniRule"/>
</dbReference>
<dbReference type="GO" id="GO:0009244">
    <property type="term" value="P:lipopolysaccharide core region biosynthetic process"/>
    <property type="evidence" value="ECO:0007669"/>
    <property type="project" value="TreeGrafter"/>
</dbReference>
<dbReference type="HAMAP" id="MF_00409">
    <property type="entry name" value="LpxK"/>
    <property type="match status" value="1"/>
</dbReference>
<dbReference type="InterPro" id="IPR003758">
    <property type="entry name" value="LpxK"/>
</dbReference>
<dbReference type="InterPro" id="IPR027417">
    <property type="entry name" value="P-loop_NTPase"/>
</dbReference>
<dbReference type="NCBIfam" id="TIGR00682">
    <property type="entry name" value="lpxK"/>
    <property type="match status" value="1"/>
</dbReference>
<dbReference type="PANTHER" id="PTHR42724">
    <property type="entry name" value="TETRAACYLDISACCHARIDE 4'-KINASE"/>
    <property type="match status" value="1"/>
</dbReference>
<dbReference type="PANTHER" id="PTHR42724:SF1">
    <property type="entry name" value="TETRAACYLDISACCHARIDE 4'-KINASE, MITOCHONDRIAL-RELATED"/>
    <property type="match status" value="1"/>
</dbReference>
<dbReference type="Pfam" id="PF02606">
    <property type="entry name" value="LpxK"/>
    <property type="match status" value="1"/>
</dbReference>
<dbReference type="SUPFAM" id="SSF52540">
    <property type="entry name" value="P-loop containing nucleoside triphosphate hydrolases"/>
    <property type="match status" value="1"/>
</dbReference>
<gene>
    <name evidence="1" type="primary">lpxK</name>
    <name type="ordered locus">GOX1984</name>
</gene>
<feature type="chain" id="PRO_0000229957" description="Tetraacyldisaccharide 4'-kinase">
    <location>
        <begin position="1"/>
        <end position="327"/>
    </location>
</feature>
<feature type="region of interest" description="Disordered" evidence="2">
    <location>
        <begin position="78"/>
        <end position="106"/>
    </location>
</feature>
<feature type="binding site" evidence="1">
    <location>
        <begin position="54"/>
        <end position="61"/>
    </location>
    <ligand>
        <name>ATP</name>
        <dbReference type="ChEBI" id="CHEBI:30616"/>
    </ligand>
</feature>
<accession>Q5FPH6</accession>
<evidence type="ECO:0000255" key="1">
    <source>
        <dbReference type="HAMAP-Rule" id="MF_00409"/>
    </source>
</evidence>
<evidence type="ECO:0000256" key="2">
    <source>
        <dbReference type="SAM" id="MobiDB-lite"/>
    </source>
</evidence>
<reference key="1">
    <citation type="journal article" date="2005" name="Nat. Biotechnol.">
        <title>Complete genome sequence of the acetic acid bacterium Gluconobacter oxydans.</title>
        <authorList>
            <person name="Prust C."/>
            <person name="Hoffmeister M."/>
            <person name="Liesegang H."/>
            <person name="Wiezer A."/>
            <person name="Fricke W.F."/>
            <person name="Ehrenreich A."/>
            <person name="Gottschalk G."/>
            <person name="Deppenmeier U."/>
        </authorList>
    </citation>
    <scope>NUCLEOTIDE SEQUENCE [LARGE SCALE GENOMIC DNA]</scope>
    <source>
        <strain>621H</strain>
    </source>
</reference>
<keyword id="KW-0067">ATP-binding</keyword>
<keyword id="KW-0418">Kinase</keyword>
<keyword id="KW-0441">Lipid A biosynthesis</keyword>
<keyword id="KW-0444">Lipid biosynthesis</keyword>
<keyword id="KW-0443">Lipid metabolism</keyword>
<keyword id="KW-0547">Nucleotide-binding</keyword>
<keyword id="KW-1185">Reference proteome</keyword>
<keyword id="KW-0808">Transferase</keyword>
<proteinExistence type="inferred from homology"/>
<name>LPXK_GLUOX</name>
<protein>
    <recommendedName>
        <fullName evidence="1">Tetraacyldisaccharide 4'-kinase</fullName>
        <ecNumber evidence="1">2.7.1.130</ecNumber>
    </recommendedName>
    <alternativeName>
        <fullName evidence="1">Lipid A 4'-kinase</fullName>
    </alternativeName>
</protein>
<comment type="function">
    <text evidence="1">Transfers the gamma-phosphate of ATP to the 4'-position of a tetraacyldisaccharide 1-phosphate intermediate (termed DS-1-P) to form tetraacyldisaccharide 1,4'-bis-phosphate (lipid IVA).</text>
</comment>
<comment type="catalytic activity">
    <reaction evidence="1">
        <text>a lipid A disaccharide + ATP = a lipid IVA + ADP + H(+)</text>
        <dbReference type="Rhea" id="RHEA:67840"/>
        <dbReference type="ChEBI" id="CHEBI:15378"/>
        <dbReference type="ChEBI" id="CHEBI:30616"/>
        <dbReference type="ChEBI" id="CHEBI:176343"/>
        <dbReference type="ChEBI" id="CHEBI:176425"/>
        <dbReference type="ChEBI" id="CHEBI:456216"/>
        <dbReference type="EC" id="2.7.1.130"/>
    </reaction>
</comment>
<comment type="pathway">
    <text evidence="1">Glycolipid biosynthesis; lipid IV(A) biosynthesis; lipid IV(A) from (3R)-3-hydroxytetradecanoyl-[acyl-carrier-protein] and UDP-N-acetyl-alpha-D-glucosamine: step 6/6.</text>
</comment>
<comment type="similarity">
    <text evidence="1">Belongs to the LpxK family.</text>
</comment>
<sequence length="327" mass="35912">MTRRPPRFWLRPTRSIAARLLRPFSFIATTLTRRRLRQPTFHASVPVLCCGNITTGGTGKTPLTLDLVQRLRDRGHHPHILSRGHGGRERGPIGVNPNRSTPRDVGDEPLLLAQSAPTWIGADRAETARLAISQGADCLVMDDGFQNPTLHQDVSVLVVDGVTGFGNGCVLPAGPLREPVPDALARAQAVVVMGDDRHNLIPTFPPHLLTAQARLVPGPEIRTLQGRRIVAFAGIGRPEKFFDMLRDAGVAPIRSLPFPDHHFYTPRDIQRLEALSRESGTTLVTTAKDAVKLPFPFRTQVKVIGVELLWADPKSPERLLDLLFSAS</sequence>